<evidence type="ECO:0000250" key="1"/>
<evidence type="ECO:0000255" key="2"/>
<evidence type="ECO:0000269" key="3">
    <source>
    </source>
</evidence>
<evidence type="ECO:0000305" key="4"/>
<sequence>MQSRLVSQSGLGRRWAVLRCALSKTYQRRTLTSTRRQFQDVFQSQLEDPTSAALFSALNSSKAVPQTLTEKIVQKYSVGLPQGKFVKSGDYVTIQPHRCMTHDNSWPCALKFMSIGASRLHNPDQIVMTLDHDVQNKSDKNLKKYRQIEEFATQHGVEFYPAGRGIGHQIMIEEGFAWPGTLAVASDSHSNMYGGVGCLGTPIVRTDAASVWATGKTWWQIPPVAKVTFKGVLPPGVTGKDVIVALCGLFNKDDVLNHAIEFTGSEETMRSLSVDTRLTIANMTTEWGALSGLFPIDSVLKGWLRGKATTAAMGLADGPFKTRAAERFTHPLLEQLFENPLTADKGAKYAKELFLDLSSLSPYVSGPNSVKVATPLKELEAQNIKVDKAYLVSCTNSRASDIAAAAKVFKEAAEKNGGKIPKIADGVKFYIAAASIPEQLAAEGNGDWQTLLEAGATQLPAGCGPCIGMGQGLLEPGEVGISASNRNFKGRMGSTEAKAYLGSPEVVAASALSGKLSGPGWYQTPEGWTEVIRGEGDGIREEDRMLTNEEALEKIIGQLDDLVADGEKRFASETPAVEESEQGLTEIYPGFPERVSGELVFCDADNVNTDGIYPGKYTYQDDVPPETMARVCMENYDPEFSTTAKEGDILVSGFNFGCGSSREQAATAILAKKIPLVVSGSFGNIFSRNSINNALMGLEVPRLVNRLRETFGSGDKVLTRRTGWTLTWDVRKSQIEVQEGPGGPKWTHKVGELPPNVQEIIAKGGLEKWVKNAIGA</sequence>
<proteinExistence type="evidence at protein level"/>
<organism>
    <name type="scientific">Emericella nidulans (strain FGSC A4 / ATCC 38163 / CBS 112.46 / NRRL 194 / M139)</name>
    <name type="common">Aspergillus nidulans</name>
    <dbReference type="NCBI Taxonomy" id="227321"/>
    <lineage>
        <taxon>Eukaryota</taxon>
        <taxon>Fungi</taxon>
        <taxon>Dikarya</taxon>
        <taxon>Ascomycota</taxon>
        <taxon>Pezizomycotina</taxon>
        <taxon>Eurotiomycetes</taxon>
        <taxon>Eurotiomycetidae</taxon>
        <taxon>Eurotiales</taxon>
        <taxon>Aspergillaceae</taxon>
        <taxon>Aspergillus</taxon>
        <taxon>Aspergillus subgen. Nidulantes</taxon>
    </lineage>
</organism>
<name>LYS4_EMENI</name>
<keyword id="KW-0028">Amino-acid biosynthesis</keyword>
<keyword id="KW-0408">Iron</keyword>
<keyword id="KW-0411">Iron-sulfur</keyword>
<keyword id="KW-0456">Lyase</keyword>
<keyword id="KW-0457">Lysine biosynthesis</keyword>
<keyword id="KW-0479">Metal-binding</keyword>
<keyword id="KW-0496">Mitochondrion</keyword>
<keyword id="KW-1185">Reference proteome</keyword>
<keyword id="KW-0809">Transit peptide</keyword>
<accession>Q92412</accession>
<accession>C8V0K3</accession>
<accession>Q5AYV9</accession>
<comment type="function">
    <text evidence="3">Catalyzes the reversible hydration of cis-homoaconitate to (2R,3S)-homoisocitrate, a step in the alpha-aminoadipate pathway for lysine biosynthesis.</text>
</comment>
<comment type="catalytic activity">
    <reaction evidence="3">
        <text>(2R,3S)-homoisocitrate = cis-homoaconitate + H2O</text>
        <dbReference type="Rhea" id="RHEA:15485"/>
        <dbReference type="ChEBI" id="CHEBI:15377"/>
        <dbReference type="ChEBI" id="CHEBI:15404"/>
        <dbReference type="ChEBI" id="CHEBI:58174"/>
        <dbReference type="EC" id="4.2.1.36"/>
    </reaction>
</comment>
<comment type="cofactor">
    <cofactor evidence="1">
        <name>[4Fe-4S] cluster</name>
        <dbReference type="ChEBI" id="CHEBI:49883"/>
    </cofactor>
    <text evidence="1">Binds 1 [4Fe-4S] cluster per subunit.</text>
</comment>
<comment type="biophysicochemical properties">
    <kinetics>
        <KM evidence="3">1.1 mM for homoisocitric acid</KM>
    </kinetics>
    <phDependence>
        <text evidence="3">Optimum pH is 8.1-8.6.</text>
    </phDependence>
</comment>
<comment type="pathway">
    <text>Amino-acid biosynthesis; L-lysine biosynthesis via AAA pathway; L-alpha-aminoadipate from 2-oxoglutarate: step 3/5.</text>
</comment>
<comment type="subcellular location">
    <subcellularLocation>
        <location evidence="1">Mitochondrion</location>
    </subcellularLocation>
</comment>
<comment type="similarity">
    <text evidence="4">Belongs to the aconitase/IPM isomerase family.</text>
</comment>
<feature type="transit peptide" description="Mitochondrion" evidence="2">
    <location>
        <begin position="1"/>
        <end position="38"/>
    </location>
</feature>
<feature type="chain" id="PRO_0000000550" description="Homoaconitase, mitochondrial">
    <location>
        <begin position="39"/>
        <end position="776"/>
    </location>
</feature>
<feature type="binding site" evidence="1">
    <location>
        <position position="394"/>
    </location>
    <ligand>
        <name>[4Fe-4S] cluster</name>
        <dbReference type="ChEBI" id="CHEBI:49883"/>
    </ligand>
</feature>
<feature type="binding site" evidence="1">
    <location>
        <position position="463"/>
    </location>
    <ligand>
        <name>[4Fe-4S] cluster</name>
        <dbReference type="ChEBI" id="CHEBI:49883"/>
    </ligand>
</feature>
<feature type="binding site" evidence="1">
    <location>
        <position position="466"/>
    </location>
    <ligand>
        <name>[4Fe-4S] cluster</name>
        <dbReference type="ChEBI" id="CHEBI:49883"/>
    </ligand>
</feature>
<feature type="sequence conflict" description="In Ref. 1; CAA67943." evidence="4" ref="1">
    <original>AD</original>
    <variation>H</variation>
    <location>
        <begin position="424"/>
        <end position="425"/>
    </location>
</feature>
<reference key="1">
    <citation type="journal article" date="1997" name="Mol. Gen. Genet.">
        <title>The Aspergillus nidulans lysF gene encodes homoaconitase, an enzyme involved in the fungus-specific lysine biosynthesis pathway.</title>
        <authorList>
            <person name="Weidner G."/>
            <person name="Steffan B."/>
            <person name="Brakhage A.A."/>
        </authorList>
    </citation>
    <scope>NUCLEOTIDE SEQUENCE [GENOMIC DNA]</scope>
    <scope>FUNCTION</scope>
    <scope>CATALYTIC ACTIVITY</scope>
    <scope>BIOPHYSICOCHEMICAL PROPERTIES</scope>
</reference>
<reference key="2">
    <citation type="journal article" date="2005" name="Nature">
        <title>Sequencing of Aspergillus nidulans and comparative analysis with A. fumigatus and A. oryzae.</title>
        <authorList>
            <person name="Galagan J.E."/>
            <person name="Calvo S.E."/>
            <person name="Cuomo C."/>
            <person name="Ma L.-J."/>
            <person name="Wortman J.R."/>
            <person name="Batzoglou S."/>
            <person name="Lee S.-I."/>
            <person name="Bastuerkmen M."/>
            <person name="Spevak C.C."/>
            <person name="Clutterbuck J."/>
            <person name="Kapitonov V."/>
            <person name="Jurka J."/>
            <person name="Scazzocchio C."/>
            <person name="Farman M.L."/>
            <person name="Butler J."/>
            <person name="Purcell S."/>
            <person name="Harris S."/>
            <person name="Braus G.H."/>
            <person name="Draht O."/>
            <person name="Busch S."/>
            <person name="D'Enfert C."/>
            <person name="Bouchier C."/>
            <person name="Goldman G.H."/>
            <person name="Bell-Pedersen D."/>
            <person name="Griffiths-Jones S."/>
            <person name="Doonan J.H."/>
            <person name="Yu J."/>
            <person name="Vienken K."/>
            <person name="Pain A."/>
            <person name="Freitag M."/>
            <person name="Selker E.U."/>
            <person name="Archer D.B."/>
            <person name="Penalva M.A."/>
            <person name="Oakley B.R."/>
            <person name="Momany M."/>
            <person name="Tanaka T."/>
            <person name="Kumagai T."/>
            <person name="Asai K."/>
            <person name="Machida M."/>
            <person name="Nierman W.C."/>
            <person name="Denning D.W."/>
            <person name="Caddick M.X."/>
            <person name="Hynes M."/>
            <person name="Paoletti M."/>
            <person name="Fischer R."/>
            <person name="Miller B.L."/>
            <person name="Dyer P.S."/>
            <person name="Sachs M.S."/>
            <person name="Osmani S.A."/>
            <person name="Birren B.W."/>
        </authorList>
    </citation>
    <scope>NUCLEOTIDE SEQUENCE [LARGE SCALE GENOMIC DNA]</scope>
    <source>
        <strain>FGSC A4 / ATCC 38163 / CBS 112.46 / NRRL 194 / M139</strain>
    </source>
</reference>
<reference key="3">
    <citation type="journal article" date="2009" name="Fungal Genet. Biol.">
        <title>The 2008 update of the Aspergillus nidulans genome annotation: a community effort.</title>
        <authorList>
            <person name="Wortman J.R."/>
            <person name="Gilsenan J.M."/>
            <person name="Joardar V."/>
            <person name="Deegan J."/>
            <person name="Clutterbuck J."/>
            <person name="Andersen M.R."/>
            <person name="Archer D."/>
            <person name="Bencina M."/>
            <person name="Braus G."/>
            <person name="Coutinho P."/>
            <person name="von Dohren H."/>
            <person name="Doonan J."/>
            <person name="Driessen A.J."/>
            <person name="Durek P."/>
            <person name="Espeso E."/>
            <person name="Fekete E."/>
            <person name="Flipphi M."/>
            <person name="Estrada C.G."/>
            <person name="Geysens S."/>
            <person name="Goldman G."/>
            <person name="de Groot P.W."/>
            <person name="Hansen K."/>
            <person name="Harris S.D."/>
            <person name="Heinekamp T."/>
            <person name="Helmstaedt K."/>
            <person name="Henrissat B."/>
            <person name="Hofmann G."/>
            <person name="Homan T."/>
            <person name="Horio T."/>
            <person name="Horiuchi H."/>
            <person name="James S."/>
            <person name="Jones M."/>
            <person name="Karaffa L."/>
            <person name="Karanyi Z."/>
            <person name="Kato M."/>
            <person name="Keller N."/>
            <person name="Kelly D.E."/>
            <person name="Kiel J.A."/>
            <person name="Kim J.M."/>
            <person name="van der Klei I.J."/>
            <person name="Klis F.M."/>
            <person name="Kovalchuk A."/>
            <person name="Krasevec N."/>
            <person name="Kubicek C.P."/>
            <person name="Liu B."/>
            <person name="Maccabe A."/>
            <person name="Meyer V."/>
            <person name="Mirabito P."/>
            <person name="Miskei M."/>
            <person name="Mos M."/>
            <person name="Mullins J."/>
            <person name="Nelson D.R."/>
            <person name="Nielsen J."/>
            <person name="Oakley B.R."/>
            <person name="Osmani S.A."/>
            <person name="Pakula T."/>
            <person name="Paszewski A."/>
            <person name="Paulsen I."/>
            <person name="Pilsyk S."/>
            <person name="Pocsi I."/>
            <person name="Punt P.J."/>
            <person name="Ram A.F."/>
            <person name="Ren Q."/>
            <person name="Robellet X."/>
            <person name="Robson G."/>
            <person name="Seiboth B."/>
            <person name="van Solingen P."/>
            <person name="Specht T."/>
            <person name="Sun J."/>
            <person name="Taheri-Talesh N."/>
            <person name="Takeshita N."/>
            <person name="Ussery D."/>
            <person name="vanKuyk P.A."/>
            <person name="Visser H."/>
            <person name="van de Vondervoort P.J."/>
            <person name="de Vries R.P."/>
            <person name="Walton J."/>
            <person name="Xiang X."/>
            <person name="Xiong Y."/>
            <person name="Zeng A.P."/>
            <person name="Brandt B.W."/>
            <person name="Cornell M.J."/>
            <person name="van den Hondel C.A."/>
            <person name="Visser J."/>
            <person name="Oliver S.G."/>
            <person name="Turner G."/>
        </authorList>
    </citation>
    <scope>GENOME REANNOTATION</scope>
    <source>
        <strain>FGSC A4 / ATCC 38163 / CBS 112.46 / NRRL 194 / M139</strain>
    </source>
</reference>
<gene>
    <name type="primary">lys4</name>
    <name type="synonym">lysF</name>
    <name type="ORF">AN6521</name>
</gene>
<dbReference type="EC" id="4.2.1.36" evidence="3"/>
<dbReference type="EMBL" id="X99624">
    <property type="protein sequence ID" value="CAA67943.1"/>
    <property type="molecule type" value="Genomic_DNA"/>
</dbReference>
<dbReference type="EMBL" id="AACD01000109">
    <property type="protein sequence ID" value="EAA57861.1"/>
    <property type="molecule type" value="Genomic_DNA"/>
</dbReference>
<dbReference type="EMBL" id="BN001301">
    <property type="protein sequence ID" value="CBF70908.1"/>
    <property type="molecule type" value="Genomic_DNA"/>
</dbReference>
<dbReference type="RefSeq" id="XP_664125.1">
    <property type="nucleotide sequence ID" value="XM_659033.1"/>
</dbReference>
<dbReference type="SMR" id="Q92412"/>
<dbReference type="FunCoup" id="Q92412">
    <property type="interactions" value="129"/>
</dbReference>
<dbReference type="STRING" id="227321.Q92412"/>
<dbReference type="EnsemblFungi" id="CBF70908">
    <property type="protein sequence ID" value="CBF70908"/>
    <property type="gene ID" value="ANIA_06521"/>
</dbReference>
<dbReference type="KEGG" id="ani:ANIA_06521"/>
<dbReference type="eggNOG" id="KOG0453">
    <property type="taxonomic scope" value="Eukaryota"/>
</dbReference>
<dbReference type="HOGENOM" id="CLU_006714_3_1_1"/>
<dbReference type="InParanoid" id="Q92412"/>
<dbReference type="OMA" id="LCDADNI"/>
<dbReference type="OrthoDB" id="10262323at2759"/>
<dbReference type="BRENDA" id="4.2.1.36">
    <property type="organism ID" value="517"/>
</dbReference>
<dbReference type="UniPathway" id="UPA00033">
    <property type="reaction ID" value="UER01027"/>
</dbReference>
<dbReference type="Proteomes" id="UP000000560">
    <property type="component" value="Chromosome I"/>
</dbReference>
<dbReference type="GO" id="GO:0005759">
    <property type="term" value="C:mitochondrial matrix"/>
    <property type="evidence" value="ECO:0007669"/>
    <property type="project" value="EnsemblFungi"/>
</dbReference>
<dbReference type="GO" id="GO:0051539">
    <property type="term" value="F:4 iron, 4 sulfur cluster binding"/>
    <property type="evidence" value="ECO:0007669"/>
    <property type="project" value="InterPro"/>
</dbReference>
<dbReference type="GO" id="GO:0004409">
    <property type="term" value="F:homoaconitate hydratase activity"/>
    <property type="evidence" value="ECO:0007669"/>
    <property type="project" value="UniProtKB-EC"/>
</dbReference>
<dbReference type="GO" id="GO:0046872">
    <property type="term" value="F:metal ion binding"/>
    <property type="evidence" value="ECO:0007669"/>
    <property type="project" value="UniProtKB-KW"/>
</dbReference>
<dbReference type="GO" id="GO:0019878">
    <property type="term" value="P:lysine biosynthetic process via aminoadipic acid"/>
    <property type="evidence" value="ECO:0007669"/>
    <property type="project" value="UniProtKB-UniPathway"/>
</dbReference>
<dbReference type="CDD" id="cd01582">
    <property type="entry name" value="Homoaconitase"/>
    <property type="match status" value="1"/>
</dbReference>
<dbReference type="CDD" id="cd01674">
    <property type="entry name" value="Homoaconitase_Swivel"/>
    <property type="match status" value="1"/>
</dbReference>
<dbReference type="FunFam" id="3.30.499.10:FF:000013">
    <property type="entry name" value="Homoaconitase, mitochondrial"/>
    <property type="match status" value="1"/>
</dbReference>
<dbReference type="FunFam" id="3.30.499.10:FF:000016">
    <property type="entry name" value="Homoaconitase, mitochondrial"/>
    <property type="match status" value="1"/>
</dbReference>
<dbReference type="Gene3D" id="3.30.499.10">
    <property type="entry name" value="Aconitase, domain 3"/>
    <property type="match status" value="2"/>
</dbReference>
<dbReference type="Gene3D" id="3.20.19.10">
    <property type="entry name" value="Aconitase, domain 4"/>
    <property type="match status" value="1"/>
</dbReference>
<dbReference type="InterPro" id="IPR015931">
    <property type="entry name" value="Acnase/IPM_dHydase_lsu_aba_1/3"/>
</dbReference>
<dbReference type="InterPro" id="IPR001030">
    <property type="entry name" value="Acoase/IPM_deHydtase_lsu_aba"/>
</dbReference>
<dbReference type="InterPro" id="IPR015928">
    <property type="entry name" value="Aconitase/3IPM_dehydase_swvl"/>
</dbReference>
<dbReference type="InterPro" id="IPR018136">
    <property type="entry name" value="Aconitase_4Fe-4S_BS"/>
</dbReference>
<dbReference type="InterPro" id="IPR036008">
    <property type="entry name" value="Aconitase_4Fe-4S_dom"/>
</dbReference>
<dbReference type="InterPro" id="IPR000573">
    <property type="entry name" value="AconitaseA/IPMdHydase_ssu_swvl"/>
</dbReference>
<dbReference type="InterPro" id="IPR004418">
    <property type="entry name" value="Homoaconitase_mito"/>
</dbReference>
<dbReference type="InterPro" id="IPR039386">
    <property type="entry name" value="Homoaconitase_swivel"/>
</dbReference>
<dbReference type="InterPro" id="IPR050067">
    <property type="entry name" value="IPM_dehydratase_rel_enz"/>
</dbReference>
<dbReference type="NCBIfam" id="TIGR00139">
    <property type="entry name" value="h_aconitase"/>
    <property type="match status" value="1"/>
</dbReference>
<dbReference type="PANTHER" id="PTHR43822:SF2">
    <property type="entry name" value="HOMOACONITASE, MITOCHONDRIAL"/>
    <property type="match status" value="1"/>
</dbReference>
<dbReference type="PANTHER" id="PTHR43822">
    <property type="entry name" value="HOMOACONITASE, MITOCHONDRIAL-RELATED"/>
    <property type="match status" value="1"/>
</dbReference>
<dbReference type="Pfam" id="PF00330">
    <property type="entry name" value="Aconitase"/>
    <property type="match status" value="1"/>
</dbReference>
<dbReference type="Pfam" id="PF00694">
    <property type="entry name" value="Aconitase_C"/>
    <property type="match status" value="1"/>
</dbReference>
<dbReference type="PRINTS" id="PR00415">
    <property type="entry name" value="ACONITASE"/>
</dbReference>
<dbReference type="SUPFAM" id="SSF53732">
    <property type="entry name" value="Aconitase iron-sulfur domain"/>
    <property type="match status" value="1"/>
</dbReference>
<dbReference type="SUPFAM" id="SSF52016">
    <property type="entry name" value="LeuD/IlvD-like"/>
    <property type="match status" value="1"/>
</dbReference>
<dbReference type="PROSITE" id="PS00450">
    <property type="entry name" value="ACONITASE_1"/>
    <property type="match status" value="1"/>
</dbReference>
<dbReference type="PROSITE" id="PS01244">
    <property type="entry name" value="ACONITASE_2"/>
    <property type="match status" value="1"/>
</dbReference>
<protein>
    <recommendedName>
        <fullName>Homoaconitase, mitochondrial</fullName>
        <ecNumber evidence="3">4.2.1.36</ecNumber>
    </recommendedName>
    <alternativeName>
        <fullName>Homoaconitate hydratase</fullName>
    </alternativeName>
</protein>